<protein>
    <recommendedName>
        <fullName evidence="8">Terminal uridylyltransferase 7</fullName>
        <shortName>TUTase 7</shortName>
        <ecNumber evidence="2">2.7.7.52</ecNumber>
    </recommendedName>
    <alternativeName>
        <fullName>Zinc finger CCHC domain-containing protein 6</fullName>
    </alternativeName>
</protein>
<keyword id="KW-0963">Cytoplasm</keyword>
<keyword id="KW-0460">Magnesium</keyword>
<keyword id="KW-0464">Manganese</keyword>
<keyword id="KW-0479">Metal-binding</keyword>
<keyword id="KW-0548">Nucleotidyltransferase</keyword>
<keyword id="KW-0597">Phosphoprotein</keyword>
<keyword id="KW-1185">Reference proteome</keyword>
<keyword id="KW-0677">Repeat</keyword>
<keyword id="KW-0808">Transferase</keyword>
<keyword id="KW-0862">Zinc</keyword>
<keyword id="KW-0863">Zinc-finger</keyword>
<feature type="chain" id="PRO_0000150958" description="Terminal uridylyltransferase 7">
    <location>
        <begin position="1"/>
        <end position="1491"/>
    </location>
</feature>
<feature type="domain" description="PAP-associated 1">
    <location>
        <begin position="551"/>
        <end position="600"/>
    </location>
</feature>
<feature type="domain" description="PAP-associated 2">
    <location>
        <begin position="1230"/>
        <end position="1282"/>
    </location>
</feature>
<feature type="zinc finger region" description="Matrin-type" evidence="4">
    <location>
        <begin position="244"/>
        <end position="274"/>
    </location>
</feature>
<feature type="zinc finger region" description="CCHC-type 1" evidence="3">
    <location>
        <begin position="959"/>
        <end position="976"/>
    </location>
</feature>
<feature type="zinc finger region" description="CCHC-type 2" evidence="3">
    <location>
        <begin position="1341"/>
        <end position="1358"/>
    </location>
</feature>
<feature type="zinc finger region" description="CCHC-type 3" evidence="3">
    <location>
        <begin position="1447"/>
        <end position="1464"/>
    </location>
</feature>
<feature type="region of interest" description="Disordered" evidence="5">
    <location>
        <begin position="165"/>
        <end position="203"/>
    </location>
</feature>
<feature type="region of interest" description="Disordered" evidence="5">
    <location>
        <begin position="740"/>
        <end position="774"/>
    </location>
</feature>
<feature type="region of interest" description="Disordered" evidence="5">
    <location>
        <begin position="834"/>
        <end position="911"/>
    </location>
</feature>
<feature type="region of interest" description="Sufficient for monouridylation activity" evidence="2">
    <location>
        <begin position="947"/>
        <end position="1491"/>
    </location>
</feature>
<feature type="region of interest" description="Disordered" evidence="5">
    <location>
        <begin position="1362"/>
        <end position="1399"/>
    </location>
</feature>
<feature type="region of interest" description="Disordered" evidence="5">
    <location>
        <begin position="1463"/>
        <end position="1491"/>
    </location>
</feature>
<feature type="compositionally biased region" description="Basic residues" evidence="5">
    <location>
        <begin position="178"/>
        <end position="187"/>
    </location>
</feature>
<feature type="compositionally biased region" description="Acidic residues" evidence="5">
    <location>
        <begin position="844"/>
        <end position="857"/>
    </location>
</feature>
<feature type="compositionally biased region" description="Acidic residues" evidence="5">
    <location>
        <begin position="885"/>
        <end position="897"/>
    </location>
</feature>
<feature type="compositionally biased region" description="Basic and acidic residues" evidence="5">
    <location>
        <begin position="1377"/>
        <end position="1399"/>
    </location>
</feature>
<feature type="compositionally biased region" description="Polar residues" evidence="5">
    <location>
        <begin position="1470"/>
        <end position="1481"/>
    </location>
</feature>
<feature type="binding site" evidence="2">
    <location>
        <begin position="1043"/>
        <end position="1046"/>
    </location>
    <ligand>
        <name>UTP</name>
        <dbReference type="ChEBI" id="CHEBI:46398"/>
    </ligand>
</feature>
<feature type="binding site" evidence="2">
    <location>
        <begin position="1053"/>
        <end position="1056"/>
    </location>
    <ligand>
        <name>UTP</name>
        <dbReference type="ChEBI" id="CHEBI:46398"/>
    </ligand>
</feature>
<feature type="binding site" evidence="1">
    <location>
        <position position="1054"/>
    </location>
    <ligand>
        <name>Mg(2+)</name>
        <dbReference type="ChEBI" id="CHEBI:18420"/>
        <note>catalytic</note>
    </ligand>
</feature>
<feature type="binding site" evidence="1">
    <location>
        <position position="1056"/>
    </location>
    <ligand>
        <name>Mg(2+)</name>
        <dbReference type="ChEBI" id="CHEBI:18420"/>
        <note>catalytic</note>
    </ligand>
</feature>
<feature type="binding site" evidence="2">
    <location>
        <position position="1126"/>
    </location>
    <ligand>
        <name>UTP</name>
        <dbReference type="ChEBI" id="CHEBI:46398"/>
    </ligand>
</feature>
<feature type="binding site" evidence="2">
    <location>
        <position position="1148"/>
    </location>
    <ligand>
        <name>UTP</name>
        <dbReference type="ChEBI" id="CHEBI:46398"/>
    </ligand>
</feature>
<feature type="binding site" evidence="2">
    <location>
        <begin position="1166"/>
        <end position="1170"/>
    </location>
    <ligand>
        <name>UTP</name>
        <dbReference type="ChEBI" id="CHEBI:46398"/>
    </ligand>
</feature>
<feature type="binding site" evidence="2">
    <location>
        <position position="1282"/>
    </location>
    <ligand>
        <name>UTP</name>
        <dbReference type="ChEBI" id="CHEBI:46398"/>
    </ligand>
</feature>
<feature type="modified residue" description="Phosphothreonine" evidence="2">
    <location>
        <position position="64"/>
    </location>
</feature>
<feature type="modified residue" description="Phosphoserine" evidence="10">
    <location>
        <position position="132"/>
    </location>
</feature>
<feature type="modified residue" description="Phosphoserine" evidence="10">
    <location>
        <position position="172"/>
    </location>
</feature>
<feature type="modified residue" description="Phosphoserine" evidence="2">
    <location>
        <position position="600"/>
    </location>
</feature>
<feature type="modified residue" description="Phosphoserine" evidence="10">
    <location>
        <position position="747"/>
    </location>
</feature>
<feature type="modified residue" description="Phosphothreonine" evidence="10">
    <location>
        <position position="865"/>
    </location>
</feature>
<feature type="modified residue" description="Phosphoserine" evidence="10">
    <location>
        <position position="891"/>
    </location>
</feature>
<feature type="sequence conflict" description="In Ref. 1; AAH23438." evidence="8" ref="1">
    <original>V</original>
    <variation>L</variation>
    <location>
        <position position="960"/>
    </location>
</feature>
<feature type="sequence conflict" description="In Ref. 2; BAE20473." evidence="8" ref="2">
    <original>Q</original>
    <variation>R</variation>
    <location>
        <position position="982"/>
    </location>
</feature>
<feature type="sequence conflict" description="In Ref. 1; AAH43111." evidence="8" ref="1">
    <original>P</original>
    <variation>L</variation>
    <location>
        <position position="1338"/>
    </location>
</feature>
<feature type="sequence conflict" description="In Ref. 2; BAE20473." evidence="8" ref="2">
    <original>C</original>
    <variation>Y</variation>
    <location>
        <position position="1343"/>
    </location>
</feature>
<feature type="sequence conflict" description="In Ref. 1; AAH43111." evidence="8" ref="1">
    <original>LSSKYMTQGRASVKRTQQES</original>
    <variation>AFT</variation>
    <location>
        <begin position="1472"/>
        <end position="1491"/>
    </location>
</feature>
<gene>
    <name evidence="9" type="primary">Tut7</name>
    <name type="synonym">Kiaa1711</name>
    <name type="synonym">Zcchc6</name>
</gene>
<comment type="function">
    <text evidence="2 6 7">Uridylyltransferase that mediates the terminal uridylation of mRNAs with short (less than 25 nucleotides) poly(A) tails, hence facilitating global mRNA decay (PubMed:28792939). Essential for both oocyte maturation and fertility. Through 3' terminal uridylation of mRNA, sculpts, with TUT7, the maternal transcriptome by eliminating transcripts during oocyte growth (PubMed:28792939). Involved in microRNA (miRNA)-induced gene silencing through uridylation of deadenylated miRNA targets. Also acts as a suppressor of miRNA biogenesis by mediating the terminal uridylation of miRNA precursors, including that of let-7 (pre-let-7) (PubMed:22898984). Uridylated pre-let-7 RNA is not processed by Dicer and undergo degradation. Pre-let-7 uridylation is strongly enhanced in the presence of LIN28A. Due to functional redundancy between ZCCHC6 and ZCCHC11, the identification of the specific role of each of these proteins is difficult (By similarity) (PubMed:22898984). Involved in microRNA (miRNA)-induced gene silencing through uridylation of deadenylated miRNA targets (By similarity). Also functions as an integral regulator of microRNA biogenesiS using 3 different uridylation mechanisms (By similarity). Acts as a suppressor of miRNA biogenesis by mediating the terminal uridylation of some miRNA precursors, including that of let-7 (pre-let-7). Uridylated pre-let-7 RNA is not processed by Dicer and undergo degradation. Pre-let-7 oligouridylation is strongly enhanced in the presence of LIN28A (PubMed:22898984). In the absence of LIN28A, TUT7 and TUT4 monouridylate group II pre-miRNAs, which includes most of pre-let7 members, that shapes an optimal 3' end overhang for efficient processing (By similarity). Add oligo-U tails to truncated pre-miRNAS with a 5' overhang which may promote rapid degradation of non-functional pre-miRNA species (By similarity). Does not play a role in replication-dependent histone mRNA degradation (By similarity). Due to functional redundancy between TUT4 and TUT7, the identification of the specific role of each of these proteins is difficult (PubMed:22898984, PubMed:28792939). TUT4 and TUT7 restrict retrotransposition of long interspersed element-1 (LINE-1) in cooperation with MOV10 counteracting the RNA chaperonne activity of L1RE1. TUT7 uridylates LINE-1 mRNAs in the cytoplasm which inhibits initiation of reverse transcription once in the nucleus, whereas uridylation by TUT4 destabilizes mRNAs in cytoplasmic ribonucleoprotein granules (By similarity).</text>
</comment>
<comment type="catalytic activity">
    <reaction>
        <text>RNA(n) + UTP = RNA(n)-3'-uridine ribonucleotide + diphosphate</text>
        <dbReference type="Rhea" id="RHEA:14785"/>
        <dbReference type="Rhea" id="RHEA-COMP:14527"/>
        <dbReference type="Rhea" id="RHEA-COMP:17348"/>
        <dbReference type="ChEBI" id="CHEBI:33019"/>
        <dbReference type="ChEBI" id="CHEBI:46398"/>
        <dbReference type="ChEBI" id="CHEBI:140395"/>
        <dbReference type="ChEBI" id="CHEBI:173116"/>
        <dbReference type="EC" id="2.7.7.52"/>
    </reaction>
</comment>
<comment type="cofactor">
    <cofactor evidence="1">
        <name>Mg(2+)</name>
        <dbReference type="ChEBI" id="CHEBI:18420"/>
    </cofactor>
    <cofactor evidence="1">
        <name>Mn(2+)</name>
        <dbReference type="ChEBI" id="CHEBI:29035"/>
    </cofactor>
</comment>
<comment type="subcellular location">
    <subcellularLocation>
        <location evidence="2">Cytoplasm</location>
    </subcellularLocation>
</comment>
<comment type="domain">
    <text evidence="2">Utilizes two multidomain functional modules during the switch from monouridylation to oligouridylation. The catalytic module (containing the 3 CCHC-type Zinc finger domains) is essential for both activities while the Lin28-interacting module (LIM) at the N-terminal part is indispensable for oligouridylation.</text>
</comment>
<comment type="disruption phenotype">
    <text evidence="7">Double conditional knockouts that have deleted both TUT4 and TUT7 at the secondary oocyte stage are infertile. Females ovulate normal numbers of oocytes with normal morphology of antral follicles but with a slight decrease in the frequency of surrounded nucleolus state oocytes. Mutant oocytes are unable to support early embryonic development, they fail to complete meiosis I properly.</text>
</comment>
<comment type="similarity">
    <text evidence="8">Belongs to the DNA polymerase type-B-like family.</text>
</comment>
<comment type="sequence caution" evidence="8">
    <conflict type="miscellaneous discrepancy">
        <sequence resource="EMBL-CDS" id="AAH23438"/>
    </conflict>
    <text>Contaminating sequence. Potential poly-A sequence.</text>
</comment>
<comment type="sequence caution" evidence="8">
    <conflict type="erroneous initiation">
        <sequence resource="EMBL-CDS" id="AAH23880"/>
    </conflict>
    <text>Truncated N-terminus.</text>
</comment>
<comment type="sequence caution" evidence="8">
    <conflict type="erroneous initiation">
        <sequence resource="EMBL-CDS" id="BAE20473"/>
    </conflict>
    <text>Truncated N-terminus.</text>
</comment>
<dbReference type="EC" id="2.7.7.52" evidence="2"/>
<dbReference type="EMBL" id="BC023880">
    <property type="protein sequence ID" value="AAH23880.1"/>
    <property type="status" value="ALT_INIT"/>
    <property type="molecule type" value="mRNA"/>
</dbReference>
<dbReference type="EMBL" id="BC043111">
    <property type="protein sequence ID" value="AAH43111.1"/>
    <property type="molecule type" value="mRNA"/>
</dbReference>
<dbReference type="EMBL" id="BC023438">
    <property type="protein sequence ID" value="AAH23438.1"/>
    <property type="status" value="ALT_SEQ"/>
    <property type="molecule type" value="mRNA"/>
</dbReference>
<dbReference type="EMBL" id="AK031043">
    <property type="protein sequence ID" value="BAE20473.1"/>
    <property type="status" value="ALT_INIT"/>
    <property type="molecule type" value="mRNA"/>
</dbReference>
<dbReference type="RefSeq" id="NP_001360891.1">
    <property type="nucleotide sequence ID" value="NM_001373962.1"/>
</dbReference>
<dbReference type="RefSeq" id="NP_001360892.1">
    <property type="nucleotide sequence ID" value="NM_001373963.1"/>
</dbReference>
<dbReference type="RefSeq" id="NP_705766.3">
    <property type="nucleotide sequence ID" value="NM_153538.3"/>
</dbReference>
<dbReference type="RefSeq" id="XP_006517271.1">
    <property type="nucleotide sequence ID" value="XM_006517208.1"/>
</dbReference>
<dbReference type="RefSeq" id="XP_017170969.1">
    <property type="nucleotide sequence ID" value="XM_017315480.1"/>
</dbReference>
<dbReference type="RefSeq" id="XP_036013865.1">
    <property type="nucleotide sequence ID" value="XM_036157972.1"/>
</dbReference>
<dbReference type="SMR" id="Q5BLK4"/>
<dbReference type="BioGRID" id="229511">
    <property type="interactions" value="1"/>
</dbReference>
<dbReference type="DIP" id="DIP-60223N"/>
<dbReference type="FunCoup" id="Q5BLK4">
    <property type="interactions" value="2237"/>
</dbReference>
<dbReference type="IntAct" id="Q5BLK4">
    <property type="interactions" value="1"/>
</dbReference>
<dbReference type="STRING" id="10090.ENSMUSP00000071623"/>
<dbReference type="GlyGen" id="Q5BLK4">
    <property type="glycosylation" value="2 sites, 2 N-linked glycans (2 sites)"/>
</dbReference>
<dbReference type="iPTMnet" id="Q5BLK4"/>
<dbReference type="PhosphoSitePlus" id="Q5BLK4"/>
<dbReference type="SwissPalm" id="Q5BLK4"/>
<dbReference type="jPOST" id="Q5BLK4"/>
<dbReference type="PaxDb" id="10090-ENSMUSP00000071623"/>
<dbReference type="ProteomicsDB" id="298387"/>
<dbReference type="Pumba" id="Q5BLK4"/>
<dbReference type="DNASU" id="214290"/>
<dbReference type="GeneID" id="214290"/>
<dbReference type="KEGG" id="mmu:214290"/>
<dbReference type="UCSC" id="uc007qvf.1">
    <property type="organism name" value="mouse"/>
</dbReference>
<dbReference type="AGR" id="MGI:2387179"/>
<dbReference type="CTD" id="79670"/>
<dbReference type="MGI" id="MGI:2387179">
    <property type="gene designation" value="Tut7"/>
</dbReference>
<dbReference type="eggNOG" id="KOG2277">
    <property type="taxonomic scope" value="Eukaryota"/>
</dbReference>
<dbReference type="InParanoid" id="Q5BLK4"/>
<dbReference type="OrthoDB" id="407432at2759"/>
<dbReference type="PhylomeDB" id="Q5BLK4"/>
<dbReference type="BioGRID-ORCS" id="214290">
    <property type="hits" value="2 hits in 76 CRISPR screens"/>
</dbReference>
<dbReference type="PRO" id="PR:Q5BLK4"/>
<dbReference type="Proteomes" id="UP000000589">
    <property type="component" value="Unplaced"/>
</dbReference>
<dbReference type="RNAct" id="Q5BLK4">
    <property type="molecule type" value="protein"/>
</dbReference>
<dbReference type="GO" id="GO:0005737">
    <property type="term" value="C:cytoplasm"/>
    <property type="evidence" value="ECO:0000250"/>
    <property type="project" value="UniProtKB"/>
</dbReference>
<dbReference type="GO" id="GO:0005829">
    <property type="term" value="C:cytosol"/>
    <property type="evidence" value="ECO:0000304"/>
    <property type="project" value="Reactome"/>
</dbReference>
<dbReference type="GO" id="GO:0035198">
    <property type="term" value="F:miRNA binding"/>
    <property type="evidence" value="ECO:0000250"/>
    <property type="project" value="UniProtKB"/>
</dbReference>
<dbReference type="GO" id="GO:0050265">
    <property type="term" value="F:RNA uridylyltransferase activity"/>
    <property type="evidence" value="ECO:0000250"/>
    <property type="project" value="UniProtKB"/>
</dbReference>
<dbReference type="GO" id="GO:0070569">
    <property type="term" value="F:uridylyltransferase activity"/>
    <property type="evidence" value="ECO:0000315"/>
    <property type="project" value="UniProtKB"/>
</dbReference>
<dbReference type="GO" id="GO:0008270">
    <property type="term" value="F:zinc ion binding"/>
    <property type="evidence" value="ECO:0007669"/>
    <property type="project" value="UniProtKB-KW"/>
</dbReference>
<dbReference type="GO" id="GO:0010586">
    <property type="term" value="P:miRNA metabolic process"/>
    <property type="evidence" value="ECO:0000250"/>
    <property type="project" value="UniProtKB"/>
</dbReference>
<dbReference type="GO" id="GO:0001556">
    <property type="term" value="P:oocyte maturation"/>
    <property type="evidence" value="ECO:0000315"/>
    <property type="project" value="UniProtKB"/>
</dbReference>
<dbReference type="GO" id="GO:1990074">
    <property type="term" value="P:polyuridylation-dependent mRNA catabolic process"/>
    <property type="evidence" value="ECO:0000315"/>
    <property type="project" value="UniProtKB"/>
</dbReference>
<dbReference type="GO" id="GO:0031054">
    <property type="term" value="P:pre-miRNA processing"/>
    <property type="evidence" value="ECO:0000250"/>
    <property type="project" value="UniProtKB"/>
</dbReference>
<dbReference type="GO" id="GO:0031123">
    <property type="term" value="P:RNA 3'-end processing"/>
    <property type="evidence" value="ECO:0000250"/>
    <property type="project" value="UniProtKB"/>
</dbReference>
<dbReference type="GO" id="GO:0141008">
    <property type="term" value="P:transposable element silencing by mRNA destabilization"/>
    <property type="evidence" value="ECO:0000250"/>
    <property type="project" value="UniProtKB"/>
</dbReference>
<dbReference type="CDD" id="cd05402">
    <property type="entry name" value="NT_PAP_TUTase"/>
    <property type="match status" value="2"/>
</dbReference>
<dbReference type="FunFam" id="1.10.1410.10:FF:000002">
    <property type="entry name" value="terminal uridylyltransferase 4 isoform X1"/>
    <property type="match status" value="1"/>
</dbReference>
<dbReference type="FunFam" id="3.30.460.10:FF:000005">
    <property type="entry name" value="terminal uridylyltransferase 4 isoform X1"/>
    <property type="match status" value="1"/>
</dbReference>
<dbReference type="FunFam" id="1.10.1410.10:FF:000004">
    <property type="entry name" value="terminal uridylyltransferase 4 isoform X2"/>
    <property type="match status" value="1"/>
</dbReference>
<dbReference type="Gene3D" id="1.10.1410.10">
    <property type="match status" value="2"/>
</dbReference>
<dbReference type="Gene3D" id="3.30.460.10">
    <property type="entry name" value="Beta Polymerase, domain 2"/>
    <property type="match status" value="2"/>
</dbReference>
<dbReference type="Gene3D" id="4.10.60.10">
    <property type="entry name" value="Zinc finger, CCHC-type"/>
    <property type="match status" value="1"/>
</dbReference>
<dbReference type="InterPro" id="IPR054708">
    <property type="entry name" value="MTPAP-like_central"/>
</dbReference>
<dbReference type="InterPro" id="IPR043519">
    <property type="entry name" value="NT_sf"/>
</dbReference>
<dbReference type="InterPro" id="IPR002058">
    <property type="entry name" value="PAP_assoc"/>
</dbReference>
<dbReference type="InterPro" id="IPR045100">
    <property type="entry name" value="TUT4/7_NTP_transf"/>
</dbReference>
<dbReference type="InterPro" id="IPR001878">
    <property type="entry name" value="Znf_CCHC"/>
</dbReference>
<dbReference type="InterPro" id="IPR036875">
    <property type="entry name" value="Znf_CCHC_sf"/>
</dbReference>
<dbReference type="PANTHER" id="PTHR12271">
    <property type="entry name" value="POLY A POLYMERASE CID PAP -RELATED"/>
    <property type="match status" value="1"/>
</dbReference>
<dbReference type="PANTHER" id="PTHR12271:SF34">
    <property type="entry name" value="TERMINAL URIDYLYLTRANSFERASE 7"/>
    <property type="match status" value="1"/>
</dbReference>
<dbReference type="Pfam" id="PF22600">
    <property type="entry name" value="MTPAP-like_central"/>
    <property type="match status" value="1"/>
</dbReference>
<dbReference type="Pfam" id="PF03828">
    <property type="entry name" value="PAP_assoc"/>
    <property type="match status" value="2"/>
</dbReference>
<dbReference type="Pfam" id="PF19088">
    <property type="entry name" value="TUTase"/>
    <property type="match status" value="1"/>
</dbReference>
<dbReference type="Pfam" id="PF16631">
    <property type="entry name" value="TUTF7_u4"/>
    <property type="match status" value="1"/>
</dbReference>
<dbReference type="Pfam" id="PF00098">
    <property type="entry name" value="zf-CCHC"/>
    <property type="match status" value="3"/>
</dbReference>
<dbReference type="SMART" id="SM00343">
    <property type="entry name" value="ZnF_C2HC"/>
    <property type="match status" value="3"/>
</dbReference>
<dbReference type="SUPFAM" id="SSF81301">
    <property type="entry name" value="Nucleotidyltransferase"/>
    <property type="match status" value="2"/>
</dbReference>
<dbReference type="SUPFAM" id="SSF81631">
    <property type="entry name" value="PAP/OAS1 substrate-binding domain"/>
    <property type="match status" value="2"/>
</dbReference>
<dbReference type="SUPFAM" id="SSF57756">
    <property type="entry name" value="Retrovirus zinc finger-like domains"/>
    <property type="match status" value="3"/>
</dbReference>
<dbReference type="PROSITE" id="PS50158">
    <property type="entry name" value="ZF_CCHC"/>
    <property type="match status" value="3"/>
</dbReference>
<dbReference type="PROSITE" id="PS00028">
    <property type="entry name" value="ZINC_FINGER_C2H2_1"/>
    <property type="match status" value="1"/>
</dbReference>
<name>TUT7_MOUSE</name>
<proteinExistence type="evidence at protein level"/>
<organism>
    <name type="scientific">Mus musculus</name>
    <name type="common">Mouse</name>
    <dbReference type="NCBI Taxonomy" id="10090"/>
    <lineage>
        <taxon>Eukaryota</taxon>
        <taxon>Metazoa</taxon>
        <taxon>Chordata</taxon>
        <taxon>Craniata</taxon>
        <taxon>Vertebrata</taxon>
        <taxon>Euteleostomi</taxon>
        <taxon>Mammalia</taxon>
        <taxon>Eutheria</taxon>
        <taxon>Euarchontoglires</taxon>
        <taxon>Glires</taxon>
        <taxon>Rodentia</taxon>
        <taxon>Myomorpha</taxon>
        <taxon>Muroidea</taxon>
        <taxon>Muridae</taxon>
        <taxon>Murinae</taxon>
        <taxon>Mus</taxon>
        <taxon>Mus</taxon>
    </lineage>
</organism>
<evidence type="ECO:0000250" key="1"/>
<evidence type="ECO:0000250" key="2">
    <source>
        <dbReference type="UniProtKB" id="Q5VYS8"/>
    </source>
</evidence>
<evidence type="ECO:0000255" key="3">
    <source>
        <dbReference type="PROSITE-ProRule" id="PRU00047"/>
    </source>
</evidence>
<evidence type="ECO:0000255" key="4">
    <source>
        <dbReference type="PROSITE-ProRule" id="PRU00130"/>
    </source>
</evidence>
<evidence type="ECO:0000256" key="5">
    <source>
        <dbReference type="SAM" id="MobiDB-lite"/>
    </source>
</evidence>
<evidence type="ECO:0000269" key="6">
    <source>
    </source>
</evidence>
<evidence type="ECO:0000269" key="7">
    <source>
    </source>
</evidence>
<evidence type="ECO:0000305" key="8"/>
<evidence type="ECO:0000312" key="9">
    <source>
        <dbReference type="MGI" id="MGI:2387179"/>
    </source>
</evidence>
<evidence type="ECO:0007744" key="10">
    <source>
    </source>
</evidence>
<accession>Q5BLK4</accession>
<accession>A1A4B1</accession>
<accession>Q3V3V7</accession>
<accession>Q8CIH3</accession>
<reference key="1">
    <citation type="journal article" date="2004" name="Genome Res.">
        <title>The status, quality, and expansion of the NIH full-length cDNA project: the Mammalian Gene Collection (MGC).</title>
        <authorList>
            <consortium name="The MGC Project Team"/>
        </authorList>
    </citation>
    <scope>NUCLEOTIDE SEQUENCE [LARGE SCALE MRNA]</scope>
    <source>
        <strain>C57BL/6J</strain>
        <tissue>Brain</tissue>
        <tissue>Mammary gland</tissue>
    </source>
</reference>
<reference key="2">
    <citation type="journal article" date="2005" name="Science">
        <title>The transcriptional landscape of the mammalian genome.</title>
        <authorList>
            <person name="Carninci P."/>
            <person name="Kasukawa T."/>
            <person name="Katayama S."/>
            <person name="Gough J."/>
            <person name="Frith M.C."/>
            <person name="Maeda N."/>
            <person name="Oyama R."/>
            <person name="Ravasi T."/>
            <person name="Lenhard B."/>
            <person name="Wells C."/>
            <person name="Kodzius R."/>
            <person name="Shimokawa K."/>
            <person name="Bajic V.B."/>
            <person name="Brenner S.E."/>
            <person name="Batalov S."/>
            <person name="Forrest A.R."/>
            <person name="Zavolan M."/>
            <person name="Davis M.J."/>
            <person name="Wilming L.G."/>
            <person name="Aidinis V."/>
            <person name="Allen J.E."/>
            <person name="Ambesi-Impiombato A."/>
            <person name="Apweiler R."/>
            <person name="Aturaliya R.N."/>
            <person name="Bailey T.L."/>
            <person name="Bansal M."/>
            <person name="Baxter L."/>
            <person name="Beisel K.W."/>
            <person name="Bersano T."/>
            <person name="Bono H."/>
            <person name="Chalk A.M."/>
            <person name="Chiu K.P."/>
            <person name="Choudhary V."/>
            <person name="Christoffels A."/>
            <person name="Clutterbuck D.R."/>
            <person name="Crowe M.L."/>
            <person name="Dalla E."/>
            <person name="Dalrymple B.P."/>
            <person name="de Bono B."/>
            <person name="Della Gatta G."/>
            <person name="di Bernardo D."/>
            <person name="Down T."/>
            <person name="Engstrom P."/>
            <person name="Fagiolini M."/>
            <person name="Faulkner G."/>
            <person name="Fletcher C.F."/>
            <person name="Fukushima T."/>
            <person name="Furuno M."/>
            <person name="Futaki S."/>
            <person name="Gariboldi M."/>
            <person name="Georgii-Hemming P."/>
            <person name="Gingeras T.R."/>
            <person name="Gojobori T."/>
            <person name="Green R.E."/>
            <person name="Gustincich S."/>
            <person name="Harbers M."/>
            <person name="Hayashi Y."/>
            <person name="Hensch T.K."/>
            <person name="Hirokawa N."/>
            <person name="Hill D."/>
            <person name="Huminiecki L."/>
            <person name="Iacono M."/>
            <person name="Ikeo K."/>
            <person name="Iwama A."/>
            <person name="Ishikawa T."/>
            <person name="Jakt M."/>
            <person name="Kanapin A."/>
            <person name="Katoh M."/>
            <person name="Kawasawa Y."/>
            <person name="Kelso J."/>
            <person name="Kitamura H."/>
            <person name="Kitano H."/>
            <person name="Kollias G."/>
            <person name="Krishnan S.P."/>
            <person name="Kruger A."/>
            <person name="Kummerfeld S.K."/>
            <person name="Kurochkin I.V."/>
            <person name="Lareau L.F."/>
            <person name="Lazarevic D."/>
            <person name="Lipovich L."/>
            <person name="Liu J."/>
            <person name="Liuni S."/>
            <person name="McWilliam S."/>
            <person name="Madan Babu M."/>
            <person name="Madera M."/>
            <person name="Marchionni L."/>
            <person name="Matsuda H."/>
            <person name="Matsuzawa S."/>
            <person name="Miki H."/>
            <person name="Mignone F."/>
            <person name="Miyake S."/>
            <person name="Morris K."/>
            <person name="Mottagui-Tabar S."/>
            <person name="Mulder N."/>
            <person name="Nakano N."/>
            <person name="Nakauchi H."/>
            <person name="Ng P."/>
            <person name="Nilsson R."/>
            <person name="Nishiguchi S."/>
            <person name="Nishikawa S."/>
            <person name="Nori F."/>
            <person name="Ohara O."/>
            <person name="Okazaki Y."/>
            <person name="Orlando V."/>
            <person name="Pang K.C."/>
            <person name="Pavan W.J."/>
            <person name="Pavesi G."/>
            <person name="Pesole G."/>
            <person name="Petrovsky N."/>
            <person name="Piazza S."/>
            <person name="Reed J."/>
            <person name="Reid J.F."/>
            <person name="Ring B.Z."/>
            <person name="Ringwald M."/>
            <person name="Rost B."/>
            <person name="Ruan Y."/>
            <person name="Salzberg S.L."/>
            <person name="Sandelin A."/>
            <person name="Schneider C."/>
            <person name="Schoenbach C."/>
            <person name="Sekiguchi K."/>
            <person name="Semple C.A."/>
            <person name="Seno S."/>
            <person name="Sessa L."/>
            <person name="Sheng Y."/>
            <person name="Shibata Y."/>
            <person name="Shimada H."/>
            <person name="Shimada K."/>
            <person name="Silva D."/>
            <person name="Sinclair B."/>
            <person name="Sperling S."/>
            <person name="Stupka E."/>
            <person name="Sugiura K."/>
            <person name="Sultana R."/>
            <person name="Takenaka Y."/>
            <person name="Taki K."/>
            <person name="Tammoja K."/>
            <person name="Tan S.L."/>
            <person name="Tang S."/>
            <person name="Taylor M.S."/>
            <person name="Tegner J."/>
            <person name="Teichmann S.A."/>
            <person name="Ueda H.R."/>
            <person name="van Nimwegen E."/>
            <person name="Verardo R."/>
            <person name="Wei C.L."/>
            <person name="Yagi K."/>
            <person name="Yamanishi H."/>
            <person name="Zabarovsky E."/>
            <person name="Zhu S."/>
            <person name="Zimmer A."/>
            <person name="Hide W."/>
            <person name="Bult C."/>
            <person name="Grimmond S.M."/>
            <person name="Teasdale R.D."/>
            <person name="Liu E.T."/>
            <person name="Brusic V."/>
            <person name="Quackenbush J."/>
            <person name="Wahlestedt C."/>
            <person name="Mattick J.S."/>
            <person name="Hume D.A."/>
            <person name="Kai C."/>
            <person name="Sasaki D."/>
            <person name="Tomaru Y."/>
            <person name="Fukuda S."/>
            <person name="Kanamori-Katayama M."/>
            <person name="Suzuki M."/>
            <person name="Aoki J."/>
            <person name="Arakawa T."/>
            <person name="Iida J."/>
            <person name="Imamura K."/>
            <person name="Itoh M."/>
            <person name="Kato T."/>
            <person name="Kawaji H."/>
            <person name="Kawagashira N."/>
            <person name="Kawashima T."/>
            <person name="Kojima M."/>
            <person name="Kondo S."/>
            <person name="Konno H."/>
            <person name="Nakano K."/>
            <person name="Ninomiya N."/>
            <person name="Nishio T."/>
            <person name="Okada M."/>
            <person name="Plessy C."/>
            <person name="Shibata K."/>
            <person name="Shiraki T."/>
            <person name="Suzuki S."/>
            <person name="Tagami M."/>
            <person name="Waki K."/>
            <person name="Watahiki A."/>
            <person name="Okamura-Oho Y."/>
            <person name="Suzuki H."/>
            <person name="Kawai J."/>
            <person name="Hayashizaki Y."/>
        </authorList>
    </citation>
    <scope>NUCLEOTIDE SEQUENCE [LARGE SCALE MRNA] OF 110-1378</scope>
    <source>
        <strain>C57BL/6J</strain>
        <tissue>Thymus</tissue>
    </source>
</reference>
<reference key="3">
    <citation type="journal article" date="2010" name="Cell">
        <title>A tissue-specific atlas of mouse protein phosphorylation and expression.</title>
        <authorList>
            <person name="Huttlin E.L."/>
            <person name="Jedrychowski M.P."/>
            <person name="Elias J.E."/>
            <person name="Goswami T."/>
            <person name="Rad R."/>
            <person name="Beausoleil S.A."/>
            <person name="Villen J."/>
            <person name="Haas W."/>
            <person name="Sowa M.E."/>
            <person name="Gygi S.P."/>
        </authorList>
    </citation>
    <scope>PHOSPHORYLATION [LARGE SCALE ANALYSIS] AT SER-132; SER-172; SER-747; THR-865 AND SER-891</scope>
    <scope>IDENTIFICATION BY MASS SPECTROMETRY [LARGE SCALE ANALYSIS]</scope>
    <source>
        <tissue>Kidney</tissue>
        <tissue>Lung</tissue>
        <tissue>Pancreas</tissue>
        <tissue>Spleen</tissue>
        <tissue>Testis</tissue>
    </source>
</reference>
<reference key="4">
    <citation type="journal article" date="2012" name="RNA">
        <title>Lin28-mediated control of let-7 microRNA expression by alternative TUTases Zcchc11 (TUT4) and Zcchc6 (TUT7).</title>
        <authorList>
            <person name="Thornton J.E."/>
            <person name="Chang H.M."/>
            <person name="Piskounova E."/>
            <person name="Gregory R.I."/>
        </authorList>
    </citation>
    <scope>FUNCTION IN PRE-LET-7 REPRESSION</scope>
</reference>
<reference key="5">
    <citation type="journal article" date="2017" name="Nature">
        <title>mRNA 3' uridylation and poly(A) tail length sculpt the mammalian maternal transcriptome.</title>
        <authorList>
            <person name="Morgan M."/>
            <person name="Much C."/>
            <person name="DiGiacomo M."/>
            <person name="Azzi C."/>
            <person name="Ivanova I."/>
            <person name="Vitsios D.M."/>
            <person name="Pistolic J."/>
            <person name="Collier P."/>
            <person name="Moreira P.N."/>
            <person name="Benes V."/>
            <person name="Enright A.J."/>
            <person name="O'Carroll D."/>
        </authorList>
    </citation>
    <scope>FUNCTION</scope>
    <scope>DISRUPTION PHENOTYPE</scope>
</reference>
<sequence length="1491" mass="169103">MGDTAKPYFVKRTKDRGIIDDDDFRRGHPQQDYLIMDDYAKGHSSKMEKGLPKKKISPGNYGNTPRKGLYGVSSNPYAFKNPIYSQPAWMNDNHKDQNKKWLSDELAGNADSWREFKPGPRIPVISRSRKESFQESDDAYRWQEGRGCRAVRRLFQKDLSSLEAMSEMEAGSPENKKQRSRPRKPRRTRTEDSEQDGDLDGPVIDESVLSTKELLGLQQAEERLKRDCIDRLKRRPRNCPTAKYTCKLCDALIDSIPFAHKHIKEKRHKKNLKEKQEEELLTTLPPPAPSQIHAVGSAIDRVVQEFGLHSENLDQRLEIKRVMESVFRHKLPDCSLRLYGSSCSRLGFRDSDVNIDVQFPAVMSQPDVLLLVQECLKNSDSFIDVDADFHARVPVVVCRDKQSGLLCKVSAGNENAWLTTKHLTALGKLEPRLVPLVIAFRYWAKLCSIDRPEEGGLPPYVFALMAVFFLQQRKEPLLPVYLGSWIEEFSLNKLGNFSLKDVEKDSVVWEYTDNSTGDTSSAKEEAPKETAAKKGQVPLTFNIKHQPSVPVGQLWVELLRFYALEFNLADLVISIRVKELISRESKDWPKKRIAIEDPYSVKRNVARTLNNQPVFEYILHCLRTTYKYFALPHKVTKPNLTKPPSPVTCVSDPYREAKNGGPEPQATNIDKLGNAAVAQDPGVQTSGDCRAQLVTLKNTTEEVGSPAKEKTGGVHIPAHQESSGCVQAEVSCEGLEDATAELPETGSDNEEVRRKTKHPLSTDDQGLSSSKHPELQNCGSLCGLQADNTLELVAEECNSCASLDNKAEVNEERIEGAEELEEAAALSCFSPSVQSRTSAAMHFDDEEEEEEEEEEEEPRLSINLTEDEEGVANEHQVDSRYAGSGEEDALSEEDDLAEPAKGEDTGECGENVGGTLLIDLNRITLKEESFPEEDLPGDQSEFFYEFRKLTFTKGKSPTVVCSLCKREGHLKKDCPEDFKRVQLEPLPPLTPKFSNILDQVCVQCYKDFSPTIVEDQAREHIRQNLESFIKQDFPGTKLSLFGSSKNGFGFKQSDLDVCMTINGHETAEGLDCVRTIEELARVLRKHSGLRNILPITTAKVPIVKFFHLRSGLEVDISLYNTLALHNTRLLSAYSAIDPRVKYLCYTMKVFTKMCDIGDASRGSLSSYAYTLMVLYFLQQRSPPVIPVLQEIYKGEKKPEILVDGWNIYFFDQINELPTCWPEYGKNTEPVGQLWLGLLRFYTEEFDFKEHVISIRRKSLLTTFKKQWTSKYIVIEDPFDLNHNLGAGLSRKMTNFIMKAFINGRRVFGIPVKGFPKDNPSKLAYFFDPDVLTEGELAPNDRCCRICGKIGHFMKDCPMRRKVRRRRDQEDTPNQRYSESKEKRSKEDKEIQNKYTEKEVSTKEDKLTPCAAAKAKPVRAAVDLGREKLLRTPTEKWKRQDDRDSREKRCFICGREGHIKKECPQFKGSPGSLSSKYMTQGRASVKRTQQES</sequence>